<proteinExistence type="inferred from homology"/>
<gene>
    <name evidence="1" type="primary">rplW</name>
    <name type="ordered locus">LBJ_2657</name>
</gene>
<reference key="1">
    <citation type="journal article" date="2006" name="Proc. Natl. Acad. Sci. U.S.A.">
        <title>Genome reduction in Leptospira borgpetersenii reflects limited transmission potential.</title>
        <authorList>
            <person name="Bulach D.M."/>
            <person name="Zuerner R.L."/>
            <person name="Wilson P."/>
            <person name="Seemann T."/>
            <person name="McGrath A."/>
            <person name="Cullen P.A."/>
            <person name="Davis J."/>
            <person name="Johnson M."/>
            <person name="Kuczek E."/>
            <person name="Alt D.P."/>
            <person name="Peterson-Burch B."/>
            <person name="Coppel R.L."/>
            <person name="Rood J.I."/>
            <person name="Davies J.K."/>
            <person name="Adler B."/>
        </authorList>
    </citation>
    <scope>NUCLEOTIDE SEQUENCE [LARGE SCALE GENOMIC DNA]</scope>
    <source>
        <strain>JB197</strain>
    </source>
</reference>
<protein>
    <recommendedName>
        <fullName evidence="1">Large ribosomal subunit protein uL23</fullName>
    </recommendedName>
    <alternativeName>
        <fullName evidence="2">50S ribosomal protein L23</fullName>
    </alternativeName>
</protein>
<keyword id="KW-0687">Ribonucleoprotein</keyword>
<keyword id="KW-0689">Ribosomal protein</keyword>
<keyword id="KW-0694">RNA-binding</keyword>
<keyword id="KW-0699">rRNA-binding</keyword>
<accession>Q04PU0</accession>
<feature type="chain" id="PRO_1000068100" description="Large ribosomal subunit protein uL23">
    <location>
        <begin position="1"/>
        <end position="104"/>
    </location>
</feature>
<comment type="function">
    <text evidence="1">One of the early assembly proteins it binds 23S rRNA. One of the proteins that surrounds the polypeptide exit tunnel on the outside of the ribosome. Forms the main docking site for trigger factor binding to the ribosome.</text>
</comment>
<comment type="subunit">
    <text evidence="1">Part of the 50S ribosomal subunit. Contacts protein L29, and trigger factor when it is bound to the ribosome.</text>
</comment>
<comment type="similarity">
    <text evidence="1">Belongs to the universal ribosomal protein uL23 family.</text>
</comment>
<evidence type="ECO:0000255" key="1">
    <source>
        <dbReference type="HAMAP-Rule" id="MF_01369"/>
    </source>
</evidence>
<evidence type="ECO:0000305" key="2"/>
<sequence>MNLQDVILTPVVTEKSQDLETIGANSKKGTRMVKYTVKVHVDANKTLIKEAFKKIFKVTPSSVNVQVYRGKIKRFRNMPAPRPHWKKAVVTFRDGASIDFAKEA</sequence>
<organism>
    <name type="scientific">Leptospira borgpetersenii serovar Hardjo-bovis (strain JB197)</name>
    <dbReference type="NCBI Taxonomy" id="355277"/>
    <lineage>
        <taxon>Bacteria</taxon>
        <taxon>Pseudomonadati</taxon>
        <taxon>Spirochaetota</taxon>
        <taxon>Spirochaetia</taxon>
        <taxon>Leptospirales</taxon>
        <taxon>Leptospiraceae</taxon>
        <taxon>Leptospira</taxon>
    </lineage>
</organism>
<name>RL23_LEPBJ</name>
<dbReference type="EMBL" id="CP000350">
    <property type="protein sequence ID" value="ABJ77080.1"/>
    <property type="molecule type" value="Genomic_DNA"/>
</dbReference>
<dbReference type="RefSeq" id="WP_011669433.1">
    <property type="nucleotide sequence ID" value="NC_008510.1"/>
</dbReference>
<dbReference type="SMR" id="Q04PU0"/>
<dbReference type="KEGG" id="lbj:LBJ_2657"/>
<dbReference type="HOGENOM" id="CLU_037562_3_2_12"/>
<dbReference type="Proteomes" id="UP000000656">
    <property type="component" value="Chromosome 1"/>
</dbReference>
<dbReference type="GO" id="GO:1990904">
    <property type="term" value="C:ribonucleoprotein complex"/>
    <property type="evidence" value="ECO:0007669"/>
    <property type="project" value="UniProtKB-KW"/>
</dbReference>
<dbReference type="GO" id="GO:0005840">
    <property type="term" value="C:ribosome"/>
    <property type="evidence" value="ECO:0007669"/>
    <property type="project" value="UniProtKB-KW"/>
</dbReference>
<dbReference type="GO" id="GO:0019843">
    <property type="term" value="F:rRNA binding"/>
    <property type="evidence" value="ECO:0007669"/>
    <property type="project" value="UniProtKB-UniRule"/>
</dbReference>
<dbReference type="GO" id="GO:0003735">
    <property type="term" value="F:structural constituent of ribosome"/>
    <property type="evidence" value="ECO:0007669"/>
    <property type="project" value="InterPro"/>
</dbReference>
<dbReference type="GO" id="GO:0006412">
    <property type="term" value="P:translation"/>
    <property type="evidence" value="ECO:0007669"/>
    <property type="project" value="UniProtKB-UniRule"/>
</dbReference>
<dbReference type="Gene3D" id="3.30.70.330">
    <property type="match status" value="1"/>
</dbReference>
<dbReference type="HAMAP" id="MF_01369_B">
    <property type="entry name" value="Ribosomal_uL23_B"/>
    <property type="match status" value="1"/>
</dbReference>
<dbReference type="InterPro" id="IPR012677">
    <property type="entry name" value="Nucleotide-bd_a/b_plait_sf"/>
</dbReference>
<dbReference type="InterPro" id="IPR013025">
    <property type="entry name" value="Ribosomal_uL23-like"/>
</dbReference>
<dbReference type="InterPro" id="IPR012678">
    <property type="entry name" value="Ribosomal_uL23/eL15/eS24_sf"/>
</dbReference>
<dbReference type="NCBIfam" id="NF004363">
    <property type="entry name" value="PRK05738.2-4"/>
    <property type="match status" value="1"/>
</dbReference>
<dbReference type="NCBIfam" id="NF004369">
    <property type="entry name" value="PRK05738.3-5"/>
    <property type="match status" value="1"/>
</dbReference>
<dbReference type="Pfam" id="PF00276">
    <property type="entry name" value="Ribosomal_L23"/>
    <property type="match status" value="1"/>
</dbReference>
<dbReference type="SUPFAM" id="SSF54189">
    <property type="entry name" value="Ribosomal proteins S24e, L23 and L15e"/>
    <property type="match status" value="1"/>
</dbReference>